<feature type="chain" id="PRO_0000072361" description="Chaperone protein SycN">
    <location>
        <begin position="1"/>
        <end position="123"/>
    </location>
</feature>
<dbReference type="EMBL" id="X51833">
    <property type="protein sequence ID" value="CAA36131.1"/>
    <property type="molecule type" value="Genomic_DNA"/>
</dbReference>
<dbReference type="EMBL" id="BX936399">
    <property type="protein sequence ID" value="CAF25406.1"/>
    <property type="molecule type" value="Genomic_DNA"/>
</dbReference>
<dbReference type="PIR" id="S15322">
    <property type="entry name" value="S15322"/>
</dbReference>
<dbReference type="RefSeq" id="WP_002229794.1">
    <property type="nucleotide sequence ID" value="NZ_CP009711.1"/>
</dbReference>
<dbReference type="SMR" id="P61381"/>
<dbReference type="KEGG" id="ypo:BZ17_4270"/>
<dbReference type="KEGG" id="yps:pYV0063"/>
<dbReference type="PATRIC" id="fig|273123.14.peg.4506"/>
<dbReference type="Proteomes" id="UP000001011">
    <property type="component" value="Plasmid pYV"/>
</dbReference>
<dbReference type="GO" id="GO:0005737">
    <property type="term" value="C:cytoplasm"/>
    <property type="evidence" value="ECO:0007669"/>
    <property type="project" value="UniProtKB-SubCell"/>
</dbReference>
<dbReference type="GO" id="GO:0005886">
    <property type="term" value="C:plasma membrane"/>
    <property type="evidence" value="ECO:0007669"/>
    <property type="project" value="UniProtKB-SubCell"/>
</dbReference>
<dbReference type="GO" id="GO:0009306">
    <property type="term" value="P:protein secretion"/>
    <property type="evidence" value="ECO:0007669"/>
    <property type="project" value="InterPro"/>
</dbReference>
<dbReference type="CDD" id="cd17031">
    <property type="entry name" value="T3SC_IA_SycN-like"/>
    <property type="match status" value="1"/>
</dbReference>
<dbReference type="Gene3D" id="3.30.1460.10">
    <property type="match status" value="1"/>
</dbReference>
<dbReference type="InterPro" id="IPR012673">
    <property type="entry name" value="T3SS_SynN"/>
</dbReference>
<dbReference type="NCBIfam" id="TIGR02503">
    <property type="entry name" value="type_III_SycN"/>
    <property type="match status" value="1"/>
</dbReference>
<dbReference type="Pfam" id="PF21665">
    <property type="entry name" value="Type_III_SycN"/>
    <property type="match status" value="1"/>
</dbReference>
<dbReference type="SUPFAM" id="SSF69635">
    <property type="entry name" value="Type III secretory system chaperone-like"/>
    <property type="match status" value="1"/>
</dbReference>
<protein>
    <recommendedName>
        <fullName>Chaperone protein SycN</fullName>
    </recommendedName>
</protein>
<name>SYCN_YERPS</name>
<evidence type="ECO:0000250" key="1"/>
<sequence length="123" mass="13609">MSWIEPIISHFCQDLGVPTSSPLSPLIQLEMAQSGTLQLEQHGATLTLWLARSLAWHRCEDAMVKALTLTAAQKSGALPLRAGWLGESQLVLFVSLDERSLTLPLLHQAFEQLLRLQQEVLAP</sequence>
<accession>P61381</accession>
<accession>P16162</accession>
<accession>Q663K3</accession>
<organism>
    <name type="scientific">Yersinia pseudotuberculosis serotype I (strain IP32953)</name>
    <dbReference type="NCBI Taxonomy" id="273123"/>
    <lineage>
        <taxon>Bacteria</taxon>
        <taxon>Pseudomonadati</taxon>
        <taxon>Pseudomonadota</taxon>
        <taxon>Gammaproteobacteria</taxon>
        <taxon>Enterobacterales</taxon>
        <taxon>Yersiniaceae</taxon>
        <taxon>Yersinia</taxon>
    </lineage>
</organism>
<comment type="function">
    <text evidence="1">Functions as a specific chaperone for YopN. It could facilitate the secretion and the subsequent translocation of YopN (By similarity).</text>
</comment>
<comment type="subunit">
    <text evidence="1">Interacts with YscB to form a complex which specifically binds to YopN.</text>
</comment>
<comment type="subcellular location">
    <subcellularLocation>
        <location evidence="1">Cytoplasm</location>
    </subcellularLocation>
    <subcellularLocation>
        <location evidence="1">Cell inner membrane</location>
        <topology evidence="1">Peripheral membrane protein</topology>
    </subcellularLocation>
    <text evidence="1">Not exported across the inner membrane.</text>
</comment>
<proteinExistence type="inferred from homology"/>
<keyword id="KW-0997">Cell inner membrane</keyword>
<keyword id="KW-1003">Cell membrane</keyword>
<keyword id="KW-0143">Chaperone</keyword>
<keyword id="KW-0963">Cytoplasm</keyword>
<keyword id="KW-0472">Membrane</keyword>
<keyword id="KW-0614">Plasmid</keyword>
<geneLocation type="plasmid">
    <name>pIB1</name>
</geneLocation>
<geneLocation type="plasmid">
    <name>pYV</name>
</geneLocation>
<reference key="1">
    <citation type="journal article" date="1991" name="Mol. Microbiol.">
        <title>The surface-located YopN protein is involved in calcium signal transduction in Yersinia pseudotuberculosis.</title>
        <authorList>
            <person name="Forsberg A."/>
            <person name="Viitanen A.-M."/>
            <person name="Skurnik M."/>
            <person name="Wolf-Watz H."/>
        </authorList>
    </citation>
    <scope>NUCLEOTIDE SEQUENCE [GENOMIC DNA]</scope>
    <source>
        <strain>YPIII / Serotype O:3</strain>
        <plasmid>pIB1</plasmid>
    </source>
</reference>
<reference key="2">
    <citation type="journal article" date="2004" name="Proc. Natl. Acad. Sci. U.S.A.">
        <title>Insights into the evolution of Yersinia pestis through whole-genome comparison with Yersinia pseudotuberculosis.</title>
        <authorList>
            <person name="Chain P.S.G."/>
            <person name="Carniel E."/>
            <person name="Larimer F.W."/>
            <person name="Lamerdin J."/>
            <person name="Stoutland P.O."/>
            <person name="Regala W.M."/>
            <person name="Georgescu A.M."/>
            <person name="Vergez L.M."/>
            <person name="Land M.L."/>
            <person name="Motin V.L."/>
            <person name="Brubaker R.R."/>
            <person name="Fowler J."/>
            <person name="Hinnebusch J."/>
            <person name="Marceau M."/>
            <person name="Medigue C."/>
            <person name="Simonet M."/>
            <person name="Chenal-Francisque V."/>
            <person name="Souza B."/>
            <person name="Dacheux D."/>
            <person name="Elliott J.M."/>
            <person name="Derbise A."/>
            <person name="Hauser L.J."/>
            <person name="Garcia E."/>
        </authorList>
    </citation>
    <scope>NUCLEOTIDE SEQUENCE [LARGE SCALE GENOMIC DNA]</scope>
    <source>
        <strain>IP32953</strain>
        <plasmid>pYV</plasmid>
    </source>
</reference>
<gene>
    <name type="primary">sycN</name>
    <name type="ordered locus">pYV0063</name>
</gene>